<accession>A0AEZ5</accession>
<reference key="1">
    <citation type="journal article" date="2006" name="J. Bacteriol.">
        <title>Whole-genome sequence of Listeria welshimeri reveals common steps in genome reduction with Listeria innocua as compared to Listeria monocytogenes.</title>
        <authorList>
            <person name="Hain T."/>
            <person name="Steinweg C."/>
            <person name="Kuenne C.T."/>
            <person name="Billion A."/>
            <person name="Ghai R."/>
            <person name="Chatterjee S.S."/>
            <person name="Domann E."/>
            <person name="Kaerst U."/>
            <person name="Goesmann A."/>
            <person name="Bekel T."/>
            <person name="Bartels D."/>
            <person name="Kaiser O."/>
            <person name="Meyer F."/>
            <person name="Puehler A."/>
            <person name="Weisshaar B."/>
            <person name="Wehland J."/>
            <person name="Liang C."/>
            <person name="Dandekar T."/>
            <person name="Lampidis R."/>
            <person name="Kreft J."/>
            <person name="Goebel W."/>
            <person name="Chakraborty T."/>
        </authorList>
    </citation>
    <scope>NUCLEOTIDE SEQUENCE [LARGE SCALE GENOMIC DNA]</scope>
    <source>
        <strain>ATCC 35897 / DSM 20650 / CCUG 15529 / CIP 8149 / NCTC 11857 / SLCC 5334 / V8</strain>
    </source>
</reference>
<evidence type="ECO:0000255" key="1">
    <source>
        <dbReference type="HAMAP-Rule" id="MF_00061"/>
    </source>
</evidence>
<feature type="chain" id="PRO_1000007859" description="4-diphosphocytidyl-2-C-methyl-D-erythritol kinase">
    <location>
        <begin position="1"/>
        <end position="291"/>
    </location>
</feature>
<feature type="active site" evidence="1">
    <location>
        <position position="10"/>
    </location>
</feature>
<feature type="active site" evidence="1">
    <location>
        <position position="136"/>
    </location>
</feature>
<feature type="binding site" evidence="1">
    <location>
        <begin position="94"/>
        <end position="104"/>
    </location>
    <ligand>
        <name>ATP</name>
        <dbReference type="ChEBI" id="CHEBI:30616"/>
    </ligand>
</feature>
<protein>
    <recommendedName>
        <fullName evidence="1">4-diphosphocytidyl-2-C-methyl-D-erythritol kinase</fullName>
        <shortName evidence="1">CMK</shortName>
        <ecNumber evidence="1">2.7.1.148</ecNumber>
    </recommendedName>
    <alternativeName>
        <fullName evidence="1">4-(cytidine-5'-diphospho)-2-C-methyl-D-erythritol kinase</fullName>
    </alternativeName>
</protein>
<dbReference type="EC" id="2.7.1.148" evidence="1"/>
<dbReference type="EMBL" id="AM263198">
    <property type="protein sequence ID" value="CAK19577.1"/>
    <property type="molecule type" value="Genomic_DNA"/>
</dbReference>
<dbReference type="RefSeq" id="WP_011701027.1">
    <property type="nucleotide sequence ID" value="NC_008555.1"/>
</dbReference>
<dbReference type="SMR" id="A0AEZ5"/>
<dbReference type="STRING" id="386043.lwe0159"/>
<dbReference type="GeneID" id="61188039"/>
<dbReference type="KEGG" id="lwe:lwe0159"/>
<dbReference type="eggNOG" id="COG1947">
    <property type="taxonomic scope" value="Bacteria"/>
</dbReference>
<dbReference type="HOGENOM" id="CLU_053057_1_1_9"/>
<dbReference type="OrthoDB" id="9809438at2"/>
<dbReference type="UniPathway" id="UPA00056">
    <property type="reaction ID" value="UER00094"/>
</dbReference>
<dbReference type="Proteomes" id="UP000000779">
    <property type="component" value="Chromosome"/>
</dbReference>
<dbReference type="GO" id="GO:0050515">
    <property type="term" value="F:4-(cytidine 5'-diphospho)-2-C-methyl-D-erythritol kinase activity"/>
    <property type="evidence" value="ECO:0007669"/>
    <property type="project" value="UniProtKB-UniRule"/>
</dbReference>
<dbReference type="GO" id="GO:0005524">
    <property type="term" value="F:ATP binding"/>
    <property type="evidence" value="ECO:0007669"/>
    <property type="project" value="UniProtKB-UniRule"/>
</dbReference>
<dbReference type="GO" id="GO:0019288">
    <property type="term" value="P:isopentenyl diphosphate biosynthetic process, methylerythritol 4-phosphate pathway"/>
    <property type="evidence" value="ECO:0007669"/>
    <property type="project" value="UniProtKB-UniRule"/>
</dbReference>
<dbReference type="GO" id="GO:0016114">
    <property type="term" value="P:terpenoid biosynthetic process"/>
    <property type="evidence" value="ECO:0007669"/>
    <property type="project" value="InterPro"/>
</dbReference>
<dbReference type="FunFam" id="3.30.230.10:FF:000029">
    <property type="entry name" value="4-diphosphocytidyl-2-C-methyl-D-erythritol kinase"/>
    <property type="match status" value="1"/>
</dbReference>
<dbReference type="FunFam" id="3.30.70.890:FF:000006">
    <property type="entry name" value="4-diphosphocytidyl-2-C-methyl-D-erythritol kinase"/>
    <property type="match status" value="1"/>
</dbReference>
<dbReference type="Gene3D" id="3.30.230.10">
    <property type="match status" value="1"/>
</dbReference>
<dbReference type="Gene3D" id="3.30.70.890">
    <property type="entry name" value="GHMP kinase, C-terminal domain"/>
    <property type="match status" value="1"/>
</dbReference>
<dbReference type="HAMAP" id="MF_00061">
    <property type="entry name" value="IspE"/>
    <property type="match status" value="1"/>
</dbReference>
<dbReference type="InterPro" id="IPR013750">
    <property type="entry name" value="GHMP_kinase_C_dom"/>
</dbReference>
<dbReference type="InterPro" id="IPR036554">
    <property type="entry name" value="GHMP_kinase_C_sf"/>
</dbReference>
<dbReference type="InterPro" id="IPR006204">
    <property type="entry name" value="GHMP_kinase_N_dom"/>
</dbReference>
<dbReference type="InterPro" id="IPR004424">
    <property type="entry name" value="IspE"/>
</dbReference>
<dbReference type="InterPro" id="IPR020568">
    <property type="entry name" value="Ribosomal_Su5_D2-typ_SF"/>
</dbReference>
<dbReference type="InterPro" id="IPR014721">
    <property type="entry name" value="Ribsml_uS5_D2-typ_fold_subgr"/>
</dbReference>
<dbReference type="NCBIfam" id="TIGR00154">
    <property type="entry name" value="ispE"/>
    <property type="match status" value="1"/>
</dbReference>
<dbReference type="NCBIfam" id="NF011202">
    <property type="entry name" value="PRK14608.1"/>
    <property type="match status" value="1"/>
</dbReference>
<dbReference type="PANTHER" id="PTHR43527">
    <property type="entry name" value="4-DIPHOSPHOCYTIDYL-2-C-METHYL-D-ERYTHRITOL KINASE, CHLOROPLASTIC"/>
    <property type="match status" value="1"/>
</dbReference>
<dbReference type="PANTHER" id="PTHR43527:SF2">
    <property type="entry name" value="4-DIPHOSPHOCYTIDYL-2-C-METHYL-D-ERYTHRITOL KINASE, CHLOROPLASTIC"/>
    <property type="match status" value="1"/>
</dbReference>
<dbReference type="Pfam" id="PF08544">
    <property type="entry name" value="GHMP_kinases_C"/>
    <property type="match status" value="1"/>
</dbReference>
<dbReference type="Pfam" id="PF00288">
    <property type="entry name" value="GHMP_kinases_N"/>
    <property type="match status" value="1"/>
</dbReference>
<dbReference type="PIRSF" id="PIRSF010376">
    <property type="entry name" value="IspE"/>
    <property type="match status" value="1"/>
</dbReference>
<dbReference type="SUPFAM" id="SSF55060">
    <property type="entry name" value="GHMP Kinase, C-terminal domain"/>
    <property type="match status" value="1"/>
</dbReference>
<dbReference type="SUPFAM" id="SSF54211">
    <property type="entry name" value="Ribosomal protein S5 domain 2-like"/>
    <property type="match status" value="1"/>
</dbReference>
<proteinExistence type="inferred from homology"/>
<comment type="function">
    <text evidence="1">Catalyzes the phosphorylation of the position 2 hydroxy group of 4-diphosphocytidyl-2C-methyl-D-erythritol.</text>
</comment>
<comment type="catalytic activity">
    <reaction evidence="1">
        <text>4-CDP-2-C-methyl-D-erythritol + ATP = 4-CDP-2-C-methyl-D-erythritol 2-phosphate + ADP + H(+)</text>
        <dbReference type="Rhea" id="RHEA:18437"/>
        <dbReference type="ChEBI" id="CHEBI:15378"/>
        <dbReference type="ChEBI" id="CHEBI:30616"/>
        <dbReference type="ChEBI" id="CHEBI:57823"/>
        <dbReference type="ChEBI" id="CHEBI:57919"/>
        <dbReference type="ChEBI" id="CHEBI:456216"/>
        <dbReference type="EC" id="2.7.1.148"/>
    </reaction>
</comment>
<comment type="pathway">
    <text evidence="1">Isoprenoid biosynthesis; isopentenyl diphosphate biosynthesis via DXP pathway; isopentenyl diphosphate from 1-deoxy-D-xylulose 5-phosphate: step 3/6.</text>
</comment>
<comment type="similarity">
    <text evidence="1">Belongs to the GHMP kinase family. IspE subfamily.</text>
</comment>
<gene>
    <name evidence="1" type="primary">ispE</name>
    <name type="ordered locus">lwe0159</name>
</gene>
<keyword id="KW-0067">ATP-binding</keyword>
<keyword id="KW-0414">Isoprene biosynthesis</keyword>
<keyword id="KW-0418">Kinase</keyword>
<keyword id="KW-0547">Nucleotide-binding</keyword>
<keyword id="KW-0808">Transferase</keyword>
<organism>
    <name type="scientific">Listeria welshimeri serovar 6b (strain ATCC 35897 / DSM 20650 / CCUG 15529 / CIP 8149 / NCTC 11857 / SLCC 5334 / V8)</name>
    <dbReference type="NCBI Taxonomy" id="386043"/>
    <lineage>
        <taxon>Bacteria</taxon>
        <taxon>Bacillati</taxon>
        <taxon>Bacillota</taxon>
        <taxon>Bacilli</taxon>
        <taxon>Bacillales</taxon>
        <taxon>Listeriaceae</taxon>
        <taxon>Listeria</taxon>
    </lineage>
</organism>
<name>ISPE_LISW6</name>
<sequence length="291" mass="32012">MKISITAPAKINLSLDALYKREDGYHEVEMVMTTIDLADRLSLERLDEDKIVLDVKAHFIPEDRRNLIYQAALLLKKRFNVKMGVRIIIDKHIPVSAGLAGGSSDAAAALKGLNIIWELGLSIEELAEISSEIGSDIAFCVYGGTALATGRGEKITALPNIPGCWIVLAKPSISVSTPTIYKELQVENVEHPNTKKMIESIKIGDLDGIFASTGNVLESVTLEKNPQVKRIKDRMMAFGAEAALMSGSGPTVFALIKQYSRAKRVYNGLRGFCEEVYMVRPWSESENETIN</sequence>